<gene>
    <name evidence="1" type="primary">psbF</name>
    <name type="ordered locus">OtCpg00150</name>
</gene>
<feature type="chain" id="PRO_0000275735" description="Cytochrome b559 subunit beta">
    <location>
        <begin position="1"/>
        <end position="38"/>
    </location>
</feature>
<feature type="transmembrane region" description="Helical" evidence="1">
    <location>
        <begin position="13"/>
        <end position="29"/>
    </location>
</feature>
<feature type="binding site" description="axial binding residue" evidence="1">
    <location>
        <position position="17"/>
    </location>
    <ligand>
        <name>heme</name>
        <dbReference type="ChEBI" id="CHEBI:30413"/>
        <note>ligand shared with alpha subunit</note>
    </ligand>
    <ligandPart>
        <name>Fe</name>
        <dbReference type="ChEBI" id="CHEBI:18248"/>
    </ligandPart>
</feature>
<organism>
    <name type="scientific">Ostreococcus tauri</name>
    <dbReference type="NCBI Taxonomy" id="70448"/>
    <lineage>
        <taxon>Eukaryota</taxon>
        <taxon>Viridiplantae</taxon>
        <taxon>Chlorophyta</taxon>
        <taxon>Mamiellophyceae</taxon>
        <taxon>Mamiellales</taxon>
        <taxon>Bathycoccaceae</taxon>
        <taxon>Ostreococcus</taxon>
    </lineage>
</organism>
<comment type="function">
    <text evidence="1">This b-type cytochrome is tightly associated with the reaction center of photosystem II (PSII). PSII is a light-driven water:plastoquinone oxidoreductase that uses light energy to abstract electrons from H(2)O, generating O(2) and a proton gradient subsequently used for ATP formation. It consists of a core antenna complex that captures photons, and an electron transfer chain that converts photonic excitation into a charge separation.</text>
</comment>
<comment type="cofactor">
    <cofactor evidence="1">
        <name>heme b</name>
        <dbReference type="ChEBI" id="CHEBI:60344"/>
    </cofactor>
    <text evidence="1">With its partner (PsbE) binds heme. PSII binds additional chlorophylls, carotenoids and specific lipids.</text>
</comment>
<comment type="subunit">
    <text evidence="1">Heterodimer of an alpha subunit and a beta subunit. PSII is composed of 1 copy each of membrane proteins PsbA, PsbB, PsbC, PsbD, PsbE, PsbF, PsbH, PsbI, PsbJ, PsbK, PsbL, PsbM, PsbT, PsbX, PsbY, PsbZ, Psb30/Ycf12, at least 3 peripheral proteins of the oxygen-evolving complex and a large number of cofactors. It forms dimeric complexes.</text>
</comment>
<comment type="subcellular location">
    <subcellularLocation>
        <location evidence="1">Plastid</location>
        <location evidence="1">Chloroplast thylakoid membrane</location>
        <topology evidence="1">Single-pass membrane protein</topology>
    </subcellularLocation>
</comment>
<comment type="similarity">
    <text evidence="1">Belongs to the PsbE/PsbF family.</text>
</comment>
<name>PSBF_OSTTA</name>
<protein>
    <recommendedName>
        <fullName evidence="1">Cytochrome b559 subunit beta</fullName>
    </recommendedName>
    <alternativeName>
        <fullName evidence="1">PSII reaction center subunit VI</fullName>
    </alternativeName>
</protein>
<dbReference type="EMBL" id="CR954199">
    <property type="protein sequence ID" value="CAL36340.1"/>
    <property type="molecule type" value="Genomic_DNA"/>
</dbReference>
<dbReference type="RefSeq" id="YP_717218.1">
    <property type="nucleotide sequence ID" value="NC_008289.1"/>
</dbReference>
<dbReference type="FunCoup" id="Q0P3N7">
    <property type="interactions" value="41"/>
</dbReference>
<dbReference type="STRING" id="70448.Q0P3N7"/>
<dbReference type="GeneID" id="4238885"/>
<dbReference type="KEGG" id="ota:OstapCp15"/>
<dbReference type="eggNOG" id="ENOG502SEUE">
    <property type="taxonomic scope" value="Eukaryota"/>
</dbReference>
<dbReference type="InParanoid" id="Q0P3N7"/>
<dbReference type="Proteomes" id="UP000009170">
    <property type="component" value="Chloroplast"/>
</dbReference>
<dbReference type="GO" id="GO:0009535">
    <property type="term" value="C:chloroplast thylakoid membrane"/>
    <property type="evidence" value="ECO:0007669"/>
    <property type="project" value="UniProtKB-SubCell"/>
</dbReference>
<dbReference type="GO" id="GO:0009539">
    <property type="term" value="C:photosystem II reaction center"/>
    <property type="evidence" value="ECO:0007669"/>
    <property type="project" value="InterPro"/>
</dbReference>
<dbReference type="GO" id="GO:0009055">
    <property type="term" value="F:electron transfer activity"/>
    <property type="evidence" value="ECO:0007669"/>
    <property type="project" value="UniProtKB-UniRule"/>
</dbReference>
<dbReference type="GO" id="GO:0020037">
    <property type="term" value="F:heme binding"/>
    <property type="evidence" value="ECO:0007669"/>
    <property type="project" value="InterPro"/>
</dbReference>
<dbReference type="GO" id="GO:0005506">
    <property type="term" value="F:iron ion binding"/>
    <property type="evidence" value="ECO:0007669"/>
    <property type="project" value="UniProtKB-UniRule"/>
</dbReference>
<dbReference type="GO" id="GO:0009767">
    <property type="term" value="P:photosynthetic electron transport chain"/>
    <property type="evidence" value="ECO:0007669"/>
    <property type="project" value="InterPro"/>
</dbReference>
<dbReference type="HAMAP" id="MF_00643">
    <property type="entry name" value="PSII_PsbF"/>
    <property type="match status" value="1"/>
</dbReference>
<dbReference type="InterPro" id="IPR006241">
    <property type="entry name" value="PSII_cyt_b559_bsu"/>
</dbReference>
<dbReference type="InterPro" id="IPR006216">
    <property type="entry name" value="PSII_cyt_b559_CS"/>
</dbReference>
<dbReference type="InterPro" id="IPR013081">
    <property type="entry name" value="PSII_cyt_b559_N"/>
</dbReference>
<dbReference type="NCBIfam" id="TIGR01333">
    <property type="entry name" value="cyt_b559_beta"/>
    <property type="match status" value="1"/>
</dbReference>
<dbReference type="Pfam" id="PF00283">
    <property type="entry name" value="Cytochrom_B559"/>
    <property type="match status" value="1"/>
</dbReference>
<dbReference type="PIRSF" id="PIRSF000037">
    <property type="entry name" value="PsbF"/>
    <property type="match status" value="1"/>
</dbReference>
<dbReference type="SUPFAM" id="SSF161045">
    <property type="entry name" value="Cytochrome b559 subunits"/>
    <property type="match status" value="1"/>
</dbReference>
<dbReference type="PROSITE" id="PS00537">
    <property type="entry name" value="CYTOCHROME_B559"/>
    <property type="match status" value="1"/>
</dbReference>
<keyword id="KW-0150">Chloroplast</keyword>
<keyword id="KW-0249">Electron transport</keyword>
<keyword id="KW-0349">Heme</keyword>
<keyword id="KW-0408">Iron</keyword>
<keyword id="KW-0472">Membrane</keyword>
<keyword id="KW-0479">Metal-binding</keyword>
<keyword id="KW-0602">Photosynthesis</keyword>
<keyword id="KW-0604">Photosystem II</keyword>
<keyword id="KW-0934">Plastid</keyword>
<keyword id="KW-1185">Reference proteome</keyword>
<keyword id="KW-0793">Thylakoid</keyword>
<keyword id="KW-0812">Transmembrane</keyword>
<keyword id="KW-1133">Transmembrane helix</keyword>
<keyword id="KW-0813">Transport</keyword>
<sequence>MSVKTYPIFTFRWLAVHALAVPTVFFLGSITAMQFIQR</sequence>
<accession>Q0P3N7</accession>
<geneLocation type="chloroplast"/>
<reference key="1">
    <citation type="journal article" date="2007" name="Mol. Biol. Evol.">
        <title>The complete chloroplast and mitochondrial DNA sequence of Ostreococcus tauri: organelle genomes of the smallest eukaryote are examples of compaction.</title>
        <authorList>
            <person name="Robbens S."/>
            <person name="Derelle E."/>
            <person name="Ferraz C."/>
            <person name="Wuyts J."/>
            <person name="Moreau H."/>
            <person name="Van de Peer Y."/>
        </authorList>
    </citation>
    <scope>NUCLEOTIDE SEQUENCE [LARGE SCALE GENOMIC DNA]</scope>
    <source>
        <strain>OTTH0595</strain>
    </source>
</reference>
<proteinExistence type="inferred from homology"/>
<evidence type="ECO:0000255" key="1">
    <source>
        <dbReference type="HAMAP-Rule" id="MF_00643"/>
    </source>
</evidence>